<accession>P0CM22</accession>
<accession>Q55XJ0</accession>
<accession>Q5KME5</accession>
<evidence type="ECO:0000255" key="1">
    <source>
        <dbReference type="HAMAP-Rule" id="MF_03143"/>
    </source>
</evidence>
<reference key="1">
    <citation type="journal article" date="2005" name="Science">
        <title>The genome of the basidiomycetous yeast and human pathogen Cryptococcus neoformans.</title>
        <authorList>
            <person name="Loftus B.J."/>
            <person name="Fung E."/>
            <person name="Roncaglia P."/>
            <person name="Rowley D."/>
            <person name="Amedeo P."/>
            <person name="Bruno D."/>
            <person name="Vamathevan J."/>
            <person name="Miranda M."/>
            <person name="Anderson I.J."/>
            <person name="Fraser J.A."/>
            <person name="Allen J.E."/>
            <person name="Bosdet I.E."/>
            <person name="Brent M.R."/>
            <person name="Chiu R."/>
            <person name="Doering T.L."/>
            <person name="Donlin M.J."/>
            <person name="D'Souza C.A."/>
            <person name="Fox D.S."/>
            <person name="Grinberg V."/>
            <person name="Fu J."/>
            <person name="Fukushima M."/>
            <person name="Haas B.J."/>
            <person name="Huang J.C."/>
            <person name="Janbon G."/>
            <person name="Jones S.J.M."/>
            <person name="Koo H.L."/>
            <person name="Krzywinski M.I."/>
            <person name="Kwon-Chung K.J."/>
            <person name="Lengeler K.B."/>
            <person name="Maiti R."/>
            <person name="Marra M.A."/>
            <person name="Marra R.E."/>
            <person name="Mathewson C.A."/>
            <person name="Mitchell T.G."/>
            <person name="Pertea M."/>
            <person name="Riggs F.R."/>
            <person name="Salzberg S.L."/>
            <person name="Schein J.E."/>
            <person name="Shvartsbeyn A."/>
            <person name="Shin H."/>
            <person name="Shumway M."/>
            <person name="Specht C.A."/>
            <person name="Suh B.B."/>
            <person name="Tenney A."/>
            <person name="Utterback T.R."/>
            <person name="Wickes B.L."/>
            <person name="Wortman J.R."/>
            <person name="Wye N.H."/>
            <person name="Kronstad J.W."/>
            <person name="Lodge J.K."/>
            <person name="Heitman J."/>
            <person name="Davis R.W."/>
            <person name="Fraser C.M."/>
            <person name="Hyman R.W."/>
        </authorList>
    </citation>
    <scope>NUCLEOTIDE SEQUENCE [LARGE SCALE GENOMIC DNA]</scope>
    <source>
        <strain>JEC21 / ATCC MYA-565</strain>
    </source>
</reference>
<organism>
    <name type="scientific">Cryptococcus neoformans var. neoformans serotype D (strain JEC21 / ATCC MYA-565)</name>
    <name type="common">Filobasidiella neoformans</name>
    <dbReference type="NCBI Taxonomy" id="214684"/>
    <lineage>
        <taxon>Eukaryota</taxon>
        <taxon>Fungi</taxon>
        <taxon>Dikarya</taxon>
        <taxon>Basidiomycota</taxon>
        <taxon>Agaricomycotina</taxon>
        <taxon>Tremellomycetes</taxon>
        <taxon>Tremellales</taxon>
        <taxon>Cryptococcaceae</taxon>
        <taxon>Cryptococcus</taxon>
        <taxon>Cryptococcus neoformans species complex</taxon>
    </lineage>
</organism>
<feature type="chain" id="PRO_0000406716" description="Pentafunctional AROM polypeptide">
    <location>
        <begin position="1"/>
        <end position="1611"/>
    </location>
</feature>
<feature type="region of interest" description="3-dehydroquinate synthase">
    <location>
        <begin position="1"/>
        <end position="391"/>
    </location>
</feature>
<feature type="region of interest" description="EPSP synthase">
    <location>
        <begin position="404"/>
        <end position="863"/>
    </location>
</feature>
<feature type="region of interest" description="Shikimate kinase">
    <location>
        <begin position="892"/>
        <end position="1093"/>
    </location>
</feature>
<feature type="region of interest" description="3-dehydroquinase">
    <location>
        <begin position="1094"/>
        <end position="1318"/>
    </location>
</feature>
<feature type="region of interest" description="Shikimate dehydrogenase">
    <location>
        <begin position="1331"/>
        <end position="1611"/>
    </location>
</feature>
<feature type="active site" description="Proton acceptor; for 3-dehydroquinate synthase activity" evidence="1">
    <location>
        <position position="267"/>
    </location>
</feature>
<feature type="active site" description="Proton acceptor; for 3-dehydroquinate synthase activity" evidence="1">
    <location>
        <position position="282"/>
    </location>
</feature>
<feature type="active site" description="For EPSP synthase activity" evidence="1">
    <location>
        <position position="845"/>
    </location>
</feature>
<feature type="active site" description="Proton acceptor; for 3-dehydroquinate dehydratase activity" evidence="1">
    <location>
        <position position="1220"/>
    </location>
</feature>
<feature type="active site" description="Schiff-base intermediate with substrate; for 3-dehydroquinate dehydratase activity" evidence="1">
    <location>
        <position position="1248"/>
    </location>
</feature>
<feature type="binding site" evidence="1">
    <location>
        <begin position="47"/>
        <end position="49"/>
    </location>
    <ligand>
        <name>NAD(+)</name>
        <dbReference type="ChEBI" id="CHEBI:57540"/>
    </ligand>
</feature>
<feature type="binding site" evidence="1">
    <location>
        <begin position="84"/>
        <end position="87"/>
    </location>
    <ligand>
        <name>NAD(+)</name>
        <dbReference type="ChEBI" id="CHEBI:57540"/>
    </ligand>
</feature>
<feature type="binding site" evidence="1">
    <location>
        <begin position="115"/>
        <end position="117"/>
    </location>
    <ligand>
        <name>NAD(+)</name>
        <dbReference type="ChEBI" id="CHEBI:57540"/>
    </ligand>
</feature>
<feature type="binding site" evidence="1">
    <location>
        <position position="120"/>
    </location>
    <ligand>
        <name>NAD(+)</name>
        <dbReference type="ChEBI" id="CHEBI:57540"/>
    </ligand>
</feature>
<feature type="binding site" evidence="1">
    <location>
        <position position="131"/>
    </location>
    <ligand>
        <name>7-phospho-2-dehydro-3-deoxy-D-arabino-heptonate</name>
        <dbReference type="ChEBI" id="CHEBI:58394"/>
    </ligand>
</feature>
<feature type="binding site" evidence="1">
    <location>
        <begin position="140"/>
        <end position="141"/>
    </location>
    <ligand>
        <name>NAD(+)</name>
        <dbReference type="ChEBI" id="CHEBI:57540"/>
    </ligand>
</feature>
<feature type="binding site" evidence="1">
    <location>
        <position position="147"/>
    </location>
    <ligand>
        <name>7-phospho-2-dehydro-3-deoxy-D-arabino-heptonate</name>
        <dbReference type="ChEBI" id="CHEBI:58394"/>
    </ligand>
</feature>
<feature type="binding site" evidence="1">
    <location>
        <position position="153"/>
    </location>
    <ligand>
        <name>7-phospho-2-dehydro-3-deoxy-D-arabino-heptonate</name>
        <dbReference type="ChEBI" id="CHEBI:58394"/>
    </ligand>
</feature>
<feature type="binding site" evidence="1">
    <location>
        <position position="162"/>
    </location>
    <ligand>
        <name>NAD(+)</name>
        <dbReference type="ChEBI" id="CHEBI:57540"/>
    </ligand>
</feature>
<feature type="binding site" evidence="1">
    <location>
        <position position="163"/>
    </location>
    <ligand>
        <name>7-phospho-2-dehydro-3-deoxy-D-arabino-heptonate</name>
        <dbReference type="ChEBI" id="CHEBI:58394"/>
    </ligand>
</feature>
<feature type="binding site" evidence="1">
    <location>
        <begin position="180"/>
        <end position="183"/>
    </location>
    <ligand>
        <name>NAD(+)</name>
        <dbReference type="ChEBI" id="CHEBI:57540"/>
    </ligand>
</feature>
<feature type="binding site" evidence="1">
    <location>
        <position position="191"/>
    </location>
    <ligand>
        <name>NAD(+)</name>
        <dbReference type="ChEBI" id="CHEBI:57540"/>
    </ligand>
</feature>
<feature type="binding site" evidence="1">
    <location>
        <begin position="195"/>
        <end position="198"/>
    </location>
    <ligand>
        <name>7-phospho-2-dehydro-3-deoxy-D-arabino-heptonate</name>
        <dbReference type="ChEBI" id="CHEBI:58394"/>
    </ligand>
</feature>
<feature type="binding site" evidence="1">
    <location>
        <position position="195"/>
    </location>
    <ligand>
        <name>Zn(2+)</name>
        <dbReference type="ChEBI" id="CHEBI:29105"/>
        <note>catalytic</note>
    </ligand>
</feature>
<feature type="binding site" evidence="1">
    <location>
        <position position="257"/>
    </location>
    <ligand>
        <name>7-phospho-2-dehydro-3-deoxy-D-arabino-heptonate</name>
        <dbReference type="ChEBI" id="CHEBI:58394"/>
    </ligand>
</feature>
<feature type="binding site" evidence="1">
    <location>
        <begin position="271"/>
        <end position="275"/>
    </location>
    <ligand>
        <name>7-phospho-2-dehydro-3-deoxy-D-arabino-heptonate</name>
        <dbReference type="ChEBI" id="CHEBI:58394"/>
    </ligand>
</feature>
<feature type="binding site" evidence="1">
    <location>
        <position position="278"/>
    </location>
    <ligand>
        <name>7-phospho-2-dehydro-3-deoxy-D-arabino-heptonate</name>
        <dbReference type="ChEBI" id="CHEBI:58394"/>
    </ligand>
</feature>
<feature type="binding site" evidence="1">
    <location>
        <position position="278"/>
    </location>
    <ligand>
        <name>Zn(2+)</name>
        <dbReference type="ChEBI" id="CHEBI:29105"/>
        <note>catalytic</note>
    </ligand>
</feature>
<feature type="binding site" evidence="1">
    <location>
        <position position="294"/>
    </location>
    <ligand>
        <name>7-phospho-2-dehydro-3-deoxy-D-arabino-heptonate</name>
        <dbReference type="ChEBI" id="CHEBI:58394"/>
    </ligand>
</feature>
<feature type="binding site" evidence="1">
    <location>
        <position position="294"/>
    </location>
    <ligand>
        <name>Zn(2+)</name>
        <dbReference type="ChEBI" id="CHEBI:29105"/>
        <note>catalytic</note>
    </ligand>
</feature>
<feature type="binding site" evidence="1">
    <location>
        <position position="363"/>
    </location>
    <ligand>
        <name>7-phospho-2-dehydro-3-deoxy-D-arabino-heptonate</name>
        <dbReference type="ChEBI" id="CHEBI:58394"/>
    </ligand>
</feature>
<feature type="binding site" evidence="1">
    <location>
        <begin position="899"/>
        <end position="906"/>
    </location>
    <ligand>
        <name>ATP</name>
        <dbReference type="ChEBI" id="CHEBI:30616"/>
    </ligand>
</feature>
<name>ARO1_CRYNJ</name>
<proteinExistence type="inferred from homology"/>
<comment type="function">
    <text evidence="1">The AROM polypeptide catalyzes 5 consecutive enzymatic reactions in prechorismate polyaromatic amino acid biosynthesis.</text>
</comment>
<comment type="catalytic activity">
    <reaction evidence="1">
        <text>7-phospho-2-dehydro-3-deoxy-D-arabino-heptonate = 3-dehydroquinate + phosphate</text>
        <dbReference type="Rhea" id="RHEA:21968"/>
        <dbReference type="ChEBI" id="CHEBI:32364"/>
        <dbReference type="ChEBI" id="CHEBI:43474"/>
        <dbReference type="ChEBI" id="CHEBI:58394"/>
        <dbReference type="EC" id="4.2.3.4"/>
    </reaction>
</comment>
<comment type="catalytic activity">
    <reaction evidence="1">
        <text>3-dehydroquinate = 3-dehydroshikimate + H2O</text>
        <dbReference type="Rhea" id="RHEA:21096"/>
        <dbReference type="ChEBI" id="CHEBI:15377"/>
        <dbReference type="ChEBI" id="CHEBI:16630"/>
        <dbReference type="ChEBI" id="CHEBI:32364"/>
        <dbReference type="EC" id="4.2.1.10"/>
    </reaction>
</comment>
<comment type="catalytic activity">
    <reaction evidence="1">
        <text>shikimate + NADP(+) = 3-dehydroshikimate + NADPH + H(+)</text>
        <dbReference type="Rhea" id="RHEA:17737"/>
        <dbReference type="ChEBI" id="CHEBI:15378"/>
        <dbReference type="ChEBI" id="CHEBI:16630"/>
        <dbReference type="ChEBI" id="CHEBI:36208"/>
        <dbReference type="ChEBI" id="CHEBI:57783"/>
        <dbReference type="ChEBI" id="CHEBI:58349"/>
        <dbReference type="EC" id="1.1.1.25"/>
    </reaction>
</comment>
<comment type="catalytic activity">
    <reaction evidence="1">
        <text>shikimate + ATP = 3-phosphoshikimate + ADP + H(+)</text>
        <dbReference type="Rhea" id="RHEA:13121"/>
        <dbReference type="ChEBI" id="CHEBI:15378"/>
        <dbReference type="ChEBI" id="CHEBI:30616"/>
        <dbReference type="ChEBI" id="CHEBI:36208"/>
        <dbReference type="ChEBI" id="CHEBI:145989"/>
        <dbReference type="ChEBI" id="CHEBI:456216"/>
        <dbReference type="EC" id="2.7.1.71"/>
    </reaction>
</comment>
<comment type="catalytic activity">
    <reaction evidence="1">
        <text>3-phosphoshikimate + phosphoenolpyruvate = 5-O-(1-carboxyvinyl)-3-phosphoshikimate + phosphate</text>
        <dbReference type="Rhea" id="RHEA:21256"/>
        <dbReference type="ChEBI" id="CHEBI:43474"/>
        <dbReference type="ChEBI" id="CHEBI:57701"/>
        <dbReference type="ChEBI" id="CHEBI:58702"/>
        <dbReference type="ChEBI" id="CHEBI:145989"/>
        <dbReference type="EC" id="2.5.1.19"/>
    </reaction>
</comment>
<comment type="cofactor">
    <cofactor>
        <name>Zn(2+)</name>
        <dbReference type="ChEBI" id="CHEBI:29105"/>
    </cofactor>
    <text>Binds 2 Zn(2+) ions per subunit.</text>
</comment>
<comment type="pathway">
    <text evidence="1">Metabolic intermediate biosynthesis; chorismate biosynthesis; chorismate from D-erythrose 4-phosphate and phosphoenolpyruvate: step 2/7.</text>
</comment>
<comment type="pathway">
    <text evidence="1">Metabolic intermediate biosynthesis; chorismate biosynthesis; chorismate from D-erythrose 4-phosphate and phosphoenolpyruvate: step 3/7.</text>
</comment>
<comment type="pathway">
    <text evidence="1">Metabolic intermediate biosynthesis; chorismate biosynthesis; chorismate from D-erythrose 4-phosphate and phosphoenolpyruvate: step 4/7.</text>
</comment>
<comment type="pathway">
    <text evidence="1">Metabolic intermediate biosynthesis; chorismate biosynthesis; chorismate from D-erythrose 4-phosphate and phosphoenolpyruvate: step 5/7.</text>
</comment>
<comment type="pathway">
    <text evidence="1">Metabolic intermediate biosynthesis; chorismate biosynthesis; chorismate from D-erythrose 4-phosphate and phosphoenolpyruvate: step 6/7.</text>
</comment>
<comment type="subunit">
    <text evidence="1">Homodimer.</text>
</comment>
<comment type="subcellular location">
    <subcellularLocation>
        <location evidence="1">Cytoplasm</location>
    </subcellularLocation>
</comment>
<comment type="similarity">
    <text evidence="1">In the N-terminal section; belongs to the sugar phosphate cyclases superfamily. Dehydroquinate synthase family.</text>
</comment>
<comment type="similarity">
    <text evidence="1">In the 2nd section; belongs to the EPSP synthase family.</text>
</comment>
<comment type="similarity">
    <text evidence="1">In the 3rd section; belongs to the shikimate kinase family.</text>
</comment>
<comment type="similarity">
    <text evidence="1">In the 4th section; belongs to the type-I 3-dehydroquinase family.</text>
</comment>
<comment type="similarity">
    <text evidence="1">In the C-terminal section; belongs to the shikimate dehydrogenase family.</text>
</comment>
<dbReference type="EC" id="4.2.3.4" evidence="1"/>
<dbReference type="EC" id="2.5.1.19" evidence="1"/>
<dbReference type="EC" id="2.7.1.71" evidence="1"/>
<dbReference type="EC" id="4.2.1.10" evidence="1"/>
<dbReference type="EC" id="1.1.1.25" evidence="1"/>
<dbReference type="EMBL" id="AE017342">
    <property type="protein sequence ID" value="AAW41820.1"/>
    <property type="molecule type" value="Genomic_DNA"/>
</dbReference>
<dbReference type="RefSeq" id="XP_569127.1">
    <property type="nucleotide sequence ID" value="XM_569127.2"/>
</dbReference>
<dbReference type="SMR" id="P0CM22"/>
<dbReference type="FunCoup" id="P0CM22">
    <property type="interactions" value="101"/>
</dbReference>
<dbReference type="STRING" id="214684.P0CM22"/>
<dbReference type="PaxDb" id="214684-P0CM22"/>
<dbReference type="EnsemblFungi" id="AAW41820">
    <property type="protein sequence ID" value="AAW41820"/>
    <property type="gene ID" value="CNB01990"/>
</dbReference>
<dbReference type="GeneID" id="3255768"/>
<dbReference type="KEGG" id="cne:CNB01990"/>
<dbReference type="VEuPathDB" id="FungiDB:CNB01990"/>
<dbReference type="eggNOG" id="KOG0692">
    <property type="taxonomic scope" value="Eukaryota"/>
</dbReference>
<dbReference type="HOGENOM" id="CLU_001201_1_2_1"/>
<dbReference type="InParanoid" id="P0CM22"/>
<dbReference type="OMA" id="SWANMSW"/>
<dbReference type="OrthoDB" id="197068at2759"/>
<dbReference type="UniPathway" id="UPA00053">
    <property type="reaction ID" value="UER00085"/>
</dbReference>
<dbReference type="UniPathway" id="UPA00053">
    <property type="reaction ID" value="UER00086"/>
</dbReference>
<dbReference type="UniPathway" id="UPA00053">
    <property type="reaction ID" value="UER00087"/>
</dbReference>
<dbReference type="UniPathway" id="UPA00053">
    <property type="reaction ID" value="UER00088"/>
</dbReference>
<dbReference type="UniPathway" id="UPA00053">
    <property type="reaction ID" value="UER00089"/>
</dbReference>
<dbReference type="Proteomes" id="UP000002149">
    <property type="component" value="Chromosome 2"/>
</dbReference>
<dbReference type="GO" id="GO:0005737">
    <property type="term" value="C:cytoplasm"/>
    <property type="evidence" value="ECO:0007669"/>
    <property type="project" value="UniProtKB-SubCell"/>
</dbReference>
<dbReference type="GO" id="GO:0003855">
    <property type="term" value="F:3-dehydroquinate dehydratase activity"/>
    <property type="evidence" value="ECO:0007669"/>
    <property type="project" value="UniProtKB-UniRule"/>
</dbReference>
<dbReference type="GO" id="GO:0003856">
    <property type="term" value="F:3-dehydroquinate synthase activity"/>
    <property type="evidence" value="ECO:0007669"/>
    <property type="project" value="UniProtKB-UniRule"/>
</dbReference>
<dbReference type="GO" id="GO:0003866">
    <property type="term" value="F:3-phosphoshikimate 1-carboxyvinyltransferase activity"/>
    <property type="evidence" value="ECO:0000318"/>
    <property type="project" value="GO_Central"/>
</dbReference>
<dbReference type="GO" id="GO:0005524">
    <property type="term" value="F:ATP binding"/>
    <property type="evidence" value="ECO:0007669"/>
    <property type="project" value="UniProtKB-UniRule"/>
</dbReference>
<dbReference type="GO" id="GO:0046872">
    <property type="term" value="F:metal ion binding"/>
    <property type="evidence" value="ECO:0007669"/>
    <property type="project" value="UniProtKB-UniRule"/>
</dbReference>
<dbReference type="GO" id="GO:0004764">
    <property type="term" value="F:shikimate 3-dehydrogenase (NADP+) activity"/>
    <property type="evidence" value="ECO:0007669"/>
    <property type="project" value="UniProtKB-UniRule"/>
</dbReference>
<dbReference type="GO" id="GO:0004765">
    <property type="term" value="F:shikimate kinase activity"/>
    <property type="evidence" value="ECO:0007669"/>
    <property type="project" value="UniProtKB-UniRule"/>
</dbReference>
<dbReference type="GO" id="GO:0008652">
    <property type="term" value="P:amino acid biosynthetic process"/>
    <property type="evidence" value="ECO:0007669"/>
    <property type="project" value="UniProtKB-KW"/>
</dbReference>
<dbReference type="GO" id="GO:0009073">
    <property type="term" value="P:aromatic amino acid family biosynthetic process"/>
    <property type="evidence" value="ECO:0007669"/>
    <property type="project" value="UniProtKB-UniRule"/>
</dbReference>
<dbReference type="GO" id="GO:0009423">
    <property type="term" value="P:chorismate biosynthetic process"/>
    <property type="evidence" value="ECO:0000318"/>
    <property type="project" value="GO_Central"/>
</dbReference>
<dbReference type="CDD" id="cd00502">
    <property type="entry name" value="DHQase_I"/>
    <property type="match status" value="1"/>
</dbReference>
<dbReference type="CDD" id="cd08195">
    <property type="entry name" value="DHQS"/>
    <property type="match status" value="1"/>
</dbReference>
<dbReference type="CDD" id="cd01556">
    <property type="entry name" value="EPSP_synthase"/>
    <property type="match status" value="1"/>
</dbReference>
<dbReference type="CDD" id="cd01065">
    <property type="entry name" value="NAD_bind_Shikimate_DH"/>
    <property type="match status" value="1"/>
</dbReference>
<dbReference type="CDD" id="cd00464">
    <property type="entry name" value="SK"/>
    <property type="match status" value="1"/>
</dbReference>
<dbReference type="FunFam" id="1.20.1090.10:FF:000007">
    <property type="entry name" value="Pentafunctional AROM polypeptide"/>
    <property type="match status" value="1"/>
</dbReference>
<dbReference type="FunFam" id="3.20.20.70:FF:000135">
    <property type="entry name" value="Pentafunctional AROM polypeptide"/>
    <property type="match status" value="1"/>
</dbReference>
<dbReference type="FunFam" id="3.40.50.10860:FF:000026">
    <property type="entry name" value="Pentafunctional AROM polypeptide"/>
    <property type="match status" value="1"/>
</dbReference>
<dbReference type="FunFam" id="3.40.50.1970:FF:000007">
    <property type="entry name" value="Pentafunctional AROM polypeptide"/>
    <property type="match status" value="1"/>
</dbReference>
<dbReference type="FunFam" id="3.40.50.300:FF:002556">
    <property type="entry name" value="Pentafunctional AROM polypeptide"/>
    <property type="match status" value="1"/>
</dbReference>
<dbReference type="FunFam" id="3.65.10.10:FF:000007">
    <property type="entry name" value="Pentafunctional AROM polypeptide"/>
    <property type="match status" value="1"/>
</dbReference>
<dbReference type="FunFam" id="3.65.10.10:FF:000008">
    <property type="entry name" value="Pentafunctional AROM polypeptide"/>
    <property type="match status" value="1"/>
</dbReference>
<dbReference type="Gene3D" id="3.40.50.1970">
    <property type="match status" value="1"/>
</dbReference>
<dbReference type="Gene3D" id="3.20.20.70">
    <property type="entry name" value="Aldolase class I"/>
    <property type="match status" value="1"/>
</dbReference>
<dbReference type="Gene3D" id="1.20.1090.10">
    <property type="entry name" value="Dehydroquinate synthase-like - alpha domain"/>
    <property type="match status" value="1"/>
</dbReference>
<dbReference type="Gene3D" id="3.65.10.10">
    <property type="entry name" value="Enolpyruvate transferase domain"/>
    <property type="match status" value="2"/>
</dbReference>
<dbReference type="Gene3D" id="3.40.50.10860">
    <property type="entry name" value="Leucine Dehydrogenase, chain A, domain 1"/>
    <property type="match status" value="1"/>
</dbReference>
<dbReference type="Gene3D" id="3.40.50.720">
    <property type="entry name" value="NAD(P)-binding Rossmann-like Domain"/>
    <property type="match status" value="1"/>
</dbReference>
<dbReference type="Gene3D" id="3.40.50.300">
    <property type="entry name" value="P-loop containing nucleotide triphosphate hydrolases"/>
    <property type="match status" value="1"/>
</dbReference>
<dbReference type="HAMAP" id="MF_00210">
    <property type="entry name" value="EPSP_synth"/>
    <property type="match status" value="1"/>
</dbReference>
<dbReference type="HAMAP" id="MF_03143">
    <property type="entry name" value="Pentafunct_AroM"/>
    <property type="match status" value="1"/>
</dbReference>
<dbReference type="HAMAP" id="MF_00109">
    <property type="entry name" value="Shikimate_kinase"/>
    <property type="match status" value="1"/>
</dbReference>
<dbReference type="InterPro" id="IPR013785">
    <property type="entry name" value="Aldolase_TIM"/>
</dbReference>
<dbReference type="InterPro" id="IPR046346">
    <property type="entry name" value="Aminoacid_DH-like_N_sf"/>
</dbReference>
<dbReference type="InterPro" id="IPR016037">
    <property type="entry name" value="DHQ_synth_AroB"/>
</dbReference>
<dbReference type="InterPro" id="IPR030960">
    <property type="entry name" value="DHQS/DOIS_N"/>
</dbReference>
<dbReference type="InterPro" id="IPR056179">
    <property type="entry name" value="DHQS_C"/>
</dbReference>
<dbReference type="InterPro" id="IPR001381">
    <property type="entry name" value="DHquinase_I"/>
</dbReference>
<dbReference type="InterPro" id="IPR001986">
    <property type="entry name" value="Enolpyruvate_Tfrase_dom"/>
</dbReference>
<dbReference type="InterPro" id="IPR036968">
    <property type="entry name" value="Enolpyruvate_Tfrase_sf"/>
</dbReference>
<dbReference type="InterPro" id="IPR006264">
    <property type="entry name" value="EPSP_synthase"/>
</dbReference>
<dbReference type="InterPro" id="IPR023193">
    <property type="entry name" value="EPSP_synthase_CS"/>
</dbReference>
<dbReference type="InterPro" id="IPR036291">
    <property type="entry name" value="NAD(P)-bd_dom_sf"/>
</dbReference>
<dbReference type="InterPro" id="IPR027417">
    <property type="entry name" value="P-loop_NTPase"/>
</dbReference>
<dbReference type="InterPro" id="IPR008289">
    <property type="entry name" value="Pentafunct_AroM"/>
</dbReference>
<dbReference type="InterPro" id="IPR013792">
    <property type="entry name" value="RNA3'P_cycl/enolpyr_Trfase_a/b"/>
</dbReference>
<dbReference type="InterPro" id="IPR041121">
    <property type="entry name" value="SDH_C"/>
</dbReference>
<dbReference type="InterPro" id="IPR031322">
    <property type="entry name" value="Shikimate/glucono_kinase"/>
</dbReference>
<dbReference type="InterPro" id="IPR013708">
    <property type="entry name" value="Shikimate_DH-bd_N"/>
</dbReference>
<dbReference type="InterPro" id="IPR010110">
    <property type="entry name" value="Shikimate_DH_AroM-type"/>
</dbReference>
<dbReference type="InterPro" id="IPR000623">
    <property type="entry name" value="Shikimate_kinase/TSH1"/>
</dbReference>
<dbReference type="InterPro" id="IPR023000">
    <property type="entry name" value="Shikimate_kinase_CS"/>
</dbReference>
<dbReference type="InterPro" id="IPR006151">
    <property type="entry name" value="Shikm_DH/Glu-tRNA_Rdtase"/>
</dbReference>
<dbReference type="NCBIfam" id="TIGR01356">
    <property type="entry name" value="aroA"/>
    <property type="match status" value="1"/>
</dbReference>
<dbReference type="NCBIfam" id="TIGR01357">
    <property type="entry name" value="aroB"/>
    <property type="match status" value="1"/>
</dbReference>
<dbReference type="NCBIfam" id="TIGR01093">
    <property type="entry name" value="aroD"/>
    <property type="match status" value="1"/>
</dbReference>
<dbReference type="NCBIfam" id="TIGR01809">
    <property type="entry name" value="Shik-DH-AROM"/>
    <property type="match status" value="1"/>
</dbReference>
<dbReference type="PANTHER" id="PTHR21090">
    <property type="entry name" value="AROM/DEHYDROQUINATE SYNTHASE"/>
    <property type="match status" value="1"/>
</dbReference>
<dbReference type="PANTHER" id="PTHR21090:SF5">
    <property type="entry name" value="PENTAFUNCTIONAL AROM POLYPEPTIDE"/>
    <property type="match status" value="1"/>
</dbReference>
<dbReference type="Pfam" id="PF01761">
    <property type="entry name" value="DHQ_synthase"/>
    <property type="match status" value="1"/>
</dbReference>
<dbReference type="Pfam" id="PF24621">
    <property type="entry name" value="DHQS_C"/>
    <property type="match status" value="1"/>
</dbReference>
<dbReference type="Pfam" id="PF01487">
    <property type="entry name" value="DHquinase_I"/>
    <property type="match status" value="1"/>
</dbReference>
<dbReference type="Pfam" id="PF00275">
    <property type="entry name" value="EPSP_synthase"/>
    <property type="match status" value="1"/>
</dbReference>
<dbReference type="Pfam" id="PF18317">
    <property type="entry name" value="SDH_C"/>
    <property type="match status" value="1"/>
</dbReference>
<dbReference type="Pfam" id="PF01488">
    <property type="entry name" value="Shikimate_DH"/>
    <property type="match status" value="1"/>
</dbReference>
<dbReference type="Pfam" id="PF08501">
    <property type="entry name" value="Shikimate_dh_N"/>
    <property type="match status" value="1"/>
</dbReference>
<dbReference type="Pfam" id="PF01202">
    <property type="entry name" value="SKI"/>
    <property type="match status" value="1"/>
</dbReference>
<dbReference type="PIRSF" id="PIRSF000514">
    <property type="entry name" value="Pentafunct_AroM"/>
    <property type="match status" value="1"/>
</dbReference>
<dbReference type="PRINTS" id="PR01100">
    <property type="entry name" value="SHIKIMTKNASE"/>
</dbReference>
<dbReference type="SUPFAM" id="SSF51569">
    <property type="entry name" value="Aldolase"/>
    <property type="match status" value="1"/>
</dbReference>
<dbReference type="SUPFAM" id="SSF53223">
    <property type="entry name" value="Aminoacid dehydrogenase-like, N-terminal domain"/>
    <property type="match status" value="1"/>
</dbReference>
<dbReference type="SUPFAM" id="SSF56796">
    <property type="entry name" value="Dehydroquinate synthase-like"/>
    <property type="match status" value="1"/>
</dbReference>
<dbReference type="SUPFAM" id="SSF55205">
    <property type="entry name" value="EPT/RTPC-like"/>
    <property type="match status" value="1"/>
</dbReference>
<dbReference type="SUPFAM" id="SSF51735">
    <property type="entry name" value="NAD(P)-binding Rossmann-fold domains"/>
    <property type="match status" value="1"/>
</dbReference>
<dbReference type="SUPFAM" id="SSF52540">
    <property type="entry name" value="P-loop containing nucleoside triphosphate hydrolases"/>
    <property type="match status" value="1"/>
</dbReference>
<dbReference type="PROSITE" id="PS00104">
    <property type="entry name" value="EPSP_SYNTHASE_1"/>
    <property type="match status" value="1"/>
</dbReference>
<dbReference type="PROSITE" id="PS00885">
    <property type="entry name" value="EPSP_SYNTHASE_2"/>
    <property type="match status" value="1"/>
</dbReference>
<dbReference type="PROSITE" id="PS01128">
    <property type="entry name" value="SHIKIMATE_KINASE"/>
    <property type="match status" value="1"/>
</dbReference>
<sequence length="1611" mass="173474">MSSSSADVLKISILGNESIHVGFHLLPYIFKTITTTLPSSTYVLITDTNLSAIYLNDFKASFEEAASEADNKARFLVYEVAPGEGAKSRKVKGEIEDWMLDNKCTRDTVILAFGGGVIGDLTGFVAATFMRGVKFVQIPTTLLAMVDSSVGGKTAIDTPHGKNLIGAFWQPSYIFVDLAFLTTLPTREVSNGMAEVIKTAAIWKDDDFALLESRSAEISLAASSRPTGVPTAGRFVSDRSHAQSLLLQVVSGSIYVKAHIVTIDERETGLRNLVNFGHTIGHAIEAVLTPAMLHGECVSVGIVLEAEVARQLGILSQVAVGRLTRCLQAYGLPVSLSDRRITALPASSQLSVDRLLDIMKIDKKNSGPAKKIVLLSRIGKTYEEKASVVADDVISKVLCEAVTVKAATPTKSPITMATPGSKSISNRALVLAALGKGTCRVRNLLHSDDTAVMMNALVELKGAVFSWEDGGDTIVVEGGGGILSTPAKGKELYLGNAGTASRFLTTVCAMVSGSASSERSTVITGNARMKQRPIGPLVDALTANGAKVKYLESTGCLPLDIDTDGFRGGHIQLAASVSSQYVSSILLCAPYAAEQVTLELTGGQVISQPYIDMTIAMMKQFGATVERQKDEQGNLLDIYVIPKCTYVNPPEYSVESDASSATYPLAIAAITGTTCTISNIGSSSLQGDARFAKEILEPMGCIVEQTLTSTKVTGPPVGTLRALGNVDMEPMTDAFLTASVLAAVAVKPCLPERKVEGLPETASRIYGIANQRVKECNRIQAMRDQLAKFGIETDEFDDGIIIFGKPEASLFRGASIHCYDDHRVAMAFAVLSCIIDETIIEEKRCVEKTWPNFWDDLQNKIGVAVEGVELETHNQASTSAKPVSPIDQSQSDRPIFLIGMRGAGKTYVGRMAADILSGQFTDADDVFAQESHQTVSEFVAANGWDEFRKKETEILSKFVEEHRGNHVIALGGGIVETETARETLKAHVAKGGHVVHVTRALEDIEAYLDSIGNTAVRPNWGETFADVFKRREPWYQACSSHEFYNVLEAVGGQTHEEHTKAMRAECGRFFKFITGRESNRPRLSVGNPTSFLSLTFPDVTPALIHLDELTEGADAVEFRVDLLSTTGQAPTRPALPPISFVAKQLASLRLATTLPIVFSVRSKDQGGMVPSDNAEAYGALVRLGLRCACEYVDLEVCWPEQLLDSIVQLKRETHIIASWHDWTGDMAWDGEEMKAKHVLCEKYGDVAKIVGTAKSGLDNAKLAIFVGEVQSHPGAKPLLAINMGAAGQLSRILNPILTPVTHDALPSRAAPGQLTAREILQARALTGSLPAKKFVLFGSPIAHSVSPLLHNAGFATLGLPHTYRLHESEKVDQGVLEVIRSPDFGGASVTIPLKLDIIPHLDSVSEDAKIIGAVNTVIPRGGKLHGENTDWQAIHQAAAQNLDADALSYGSSTALVIGAGGTCRAAIYAMHKLRFKTIYLFNRTPENAAKVKASFPESYNIAVVTSLSSLPEAPVVVVSTVPGNSLTLDTFSQGIYLPSEVLSRPKGVAIDLAYKPHMTALLHAAEKKEGWKVVPGVEILCLQGFKQFEEWTGKRAPQKKMRKAVLDKYFA</sequence>
<protein>
    <recommendedName>
        <fullName evidence="1">Pentafunctional AROM polypeptide</fullName>
    </recommendedName>
    <domain>
        <recommendedName>
            <fullName evidence="1">3-dehydroquinate synthase</fullName>
            <shortName evidence="1">DHQS</shortName>
            <ecNumber evidence="1">4.2.3.4</ecNumber>
        </recommendedName>
    </domain>
    <domain>
        <recommendedName>
            <fullName evidence="1">3-phosphoshikimate 1-carboxyvinyltransferase</fullName>
            <ecNumber evidence="1">2.5.1.19</ecNumber>
        </recommendedName>
        <alternativeName>
            <fullName evidence="1">5-enolpyruvylshikimate-3-phosphate synthase</fullName>
            <shortName evidence="1">EPSP synthase</shortName>
            <shortName evidence="1">EPSPS</shortName>
        </alternativeName>
    </domain>
    <domain>
        <recommendedName>
            <fullName evidence="1">Shikimate kinase</fullName>
            <shortName evidence="1">SK</shortName>
            <ecNumber evidence="1">2.7.1.71</ecNumber>
        </recommendedName>
    </domain>
    <domain>
        <recommendedName>
            <fullName evidence="1">3-dehydroquinate dehydratase</fullName>
            <shortName evidence="1">3-dehydroquinase</shortName>
            <ecNumber evidence="1">4.2.1.10</ecNumber>
        </recommendedName>
    </domain>
    <domain>
        <recommendedName>
            <fullName evidence="1">Shikimate dehydrogenase</fullName>
            <ecNumber evidence="1">1.1.1.25</ecNumber>
        </recommendedName>
    </domain>
</protein>
<keyword id="KW-0028">Amino-acid biosynthesis</keyword>
<keyword id="KW-0057">Aromatic amino acid biosynthesis</keyword>
<keyword id="KW-0067">ATP-binding</keyword>
<keyword id="KW-0963">Cytoplasm</keyword>
<keyword id="KW-0418">Kinase</keyword>
<keyword id="KW-0456">Lyase</keyword>
<keyword id="KW-0479">Metal-binding</keyword>
<keyword id="KW-0511">Multifunctional enzyme</keyword>
<keyword id="KW-0521">NADP</keyword>
<keyword id="KW-0547">Nucleotide-binding</keyword>
<keyword id="KW-0560">Oxidoreductase</keyword>
<keyword id="KW-1185">Reference proteome</keyword>
<keyword id="KW-0808">Transferase</keyword>
<keyword id="KW-0862">Zinc</keyword>
<gene>
    <name type="ordered locus">CNB01990</name>
</gene>